<name>ATPD_GEOSW</name>
<reference key="1">
    <citation type="submission" date="2009-06" db="EMBL/GenBank/DDBJ databases">
        <title>Complete sequence of chromosome of Geopacillus sp. WCH70.</title>
        <authorList>
            <consortium name="US DOE Joint Genome Institute"/>
            <person name="Lucas S."/>
            <person name="Copeland A."/>
            <person name="Lapidus A."/>
            <person name="Glavina del Rio T."/>
            <person name="Dalin E."/>
            <person name="Tice H."/>
            <person name="Bruce D."/>
            <person name="Goodwin L."/>
            <person name="Pitluck S."/>
            <person name="Chertkov O."/>
            <person name="Brettin T."/>
            <person name="Detter J.C."/>
            <person name="Han C."/>
            <person name="Larimer F."/>
            <person name="Land M."/>
            <person name="Hauser L."/>
            <person name="Kyrpides N."/>
            <person name="Mikhailova N."/>
            <person name="Brumm P."/>
            <person name="Mead D.A."/>
            <person name="Richardson P."/>
        </authorList>
    </citation>
    <scope>NUCLEOTIDE SEQUENCE [LARGE SCALE GENOMIC DNA]</scope>
    <source>
        <strain>WCH70</strain>
    </source>
</reference>
<evidence type="ECO:0000255" key="1">
    <source>
        <dbReference type="HAMAP-Rule" id="MF_01416"/>
    </source>
</evidence>
<protein>
    <recommendedName>
        <fullName evidence="1">ATP synthase subunit delta</fullName>
    </recommendedName>
    <alternativeName>
        <fullName evidence="1">ATP synthase F(1) sector subunit delta</fullName>
    </alternativeName>
    <alternativeName>
        <fullName evidence="1">F-type ATPase subunit delta</fullName>
        <shortName evidence="1">F-ATPase subunit delta</shortName>
    </alternativeName>
</protein>
<accession>C5D993</accession>
<comment type="function">
    <text evidence="1">F(1)F(0) ATP synthase produces ATP from ADP in the presence of a proton or sodium gradient. F-type ATPases consist of two structural domains, F(1) containing the extramembraneous catalytic core and F(0) containing the membrane proton channel, linked together by a central stalk and a peripheral stalk. During catalysis, ATP synthesis in the catalytic domain of F(1) is coupled via a rotary mechanism of the central stalk subunits to proton translocation.</text>
</comment>
<comment type="function">
    <text evidence="1">This protein is part of the stalk that links CF(0) to CF(1). It either transmits conformational changes from CF(0) to CF(1) or is implicated in proton conduction.</text>
</comment>
<comment type="subunit">
    <text evidence="1">F-type ATPases have 2 components, F(1) - the catalytic core - and F(0) - the membrane proton channel. F(1) has five subunits: alpha(3), beta(3), gamma(1), delta(1), epsilon(1). F(0) has three main subunits: a(1), b(2) and c(10-14). The alpha and beta chains form an alternating ring which encloses part of the gamma chain. F(1) is attached to F(0) by a central stalk formed by the gamma and epsilon chains, while a peripheral stalk is formed by the delta and b chains.</text>
</comment>
<comment type="subcellular location">
    <subcellularLocation>
        <location evidence="1">Cell membrane</location>
        <topology evidence="1">Peripheral membrane protein</topology>
    </subcellularLocation>
</comment>
<comment type="similarity">
    <text evidence="1">Belongs to the ATPase delta chain family.</text>
</comment>
<proteinExistence type="inferred from homology"/>
<gene>
    <name evidence="1" type="primary">atpH</name>
    <name type="ordered locus">GWCH70_3306</name>
</gene>
<feature type="chain" id="PRO_1000215238" description="ATP synthase subunit delta">
    <location>
        <begin position="1"/>
        <end position="178"/>
    </location>
</feature>
<organism>
    <name type="scientific">Geobacillus sp. (strain WCH70)</name>
    <dbReference type="NCBI Taxonomy" id="471223"/>
    <lineage>
        <taxon>Bacteria</taxon>
        <taxon>Bacillati</taxon>
        <taxon>Bacillota</taxon>
        <taxon>Bacilli</taxon>
        <taxon>Bacillales</taxon>
        <taxon>Anoxybacillaceae</taxon>
        <taxon>Geobacillus</taxon>
    </lineage>
</organism>
<dbReference type="EMBL" id="CP001638">
    <property type="protein sequence ID" value="ACS25946.1"/>
    <property type="molecule type" value="Genomic_DNA"/>
</dbReference>
<dbReference type="SMR" id="C5D993"/>
<dbReference type="STRING" id="471223.GWCH70_3306"/>
<dbReference type="KEGG" id="gwc:GWCH70_3306"/>
<dbReference type="eggNOG" id="COG0712">
    <property type="taxonomic scope" value="Bacteria"/>
</dbReference>
<dbReference type="HOGENOM" id="CLU_085114_4_1_9"/>
<dbReference type="OrthoDB" id="9802471at2"/>
<dbReference type="GO" id="GO:0005886">
    <property type="term" value="C:plasma membrane"/>
    <property type="evidence" value="ECO:0007669"/>
    <property type="project" value="UniProtKB-SubCell"/>
</dbReference>
<dbReference type="GO" id="GO:0045259">
    <property type="term" value="C:proton-transporting ATP synthase complex"/>
    <property type="evidence" value="ECO:0007669"/>
    <property type="project" value="UniProtKB-KW"/>
</dbReference>
<dbReference type="GO" id="GO:0046933">
    <property type="term" value="F:proton-transporting ATP synthase activity, rotational mechanism"/>
    <property type="evidence" value="ECO:0007669"/>
    <property type="project" value="UniProtKB-UniRule"/>
</dbReference>
<dbReference type="Gene3D" id="1.10.520.20">
    <property type="entry name" value="N-terminal domain of the delta subunit of the F1F0-ATP synthase"/>
    <property type="match status" value="1"/>
</dbReference>
<dbReference type="HAMAP" id="MF_01416">
    <property type="entry name" value="ATP_synth_delta_bact"/>
    <property type="match status" value="1"/>
</dbReference>
<dbReference type="InterPro" id="IPR026015">
    <property type="entry name" value="ATP_synth_OSCP/delta_N_sf"/>
</dbReference>
<dbReference type="InterPro" id="IPR020781">
    <property type="entry name" value="ATPase_OSCP/d_CS"/>
</dbReference>
<dbReference type="InterPro" id="IPR000711">
    <property type="entry name" value="ATPase_OSCP/dsu"/>
</dbReference>
<dbReference type="NCBIfam" id="TIGR01145">
    <property type="entry name" value="ATP_synt_delta"/>
    <property type="match status" value="1"/>
</dbReference>
<dbReference type="NCBIfam" id="NF004403">
    <property type="entry name" value="PRK05758.2-4"/>
    <property type="match status" value="1"/>
</dbReference>
<dbReference type="PANTHER" id="PTHR11910">
    <property type="entry name" value="ATP SYNTHASE DELTA CHAIN"/>
    <property type="match status" value="1"/>
</dbReference>
<dbReference type="Pfam" id="PF00213">
    <property type="entry name" value="OSCP"/>
    <property type="match status" value="1"/>
</dbReference>
<dbReference type="PRINTS" id="PR00125">
    <property type="entry name" value="ATPASEDELTA"/>
</dbReference>
<dbReference type="SUPFAM" id="SSF47928">
    <property type="entry name" value="N-terminal domain of the delta subunit of the F1F0-ATP synthase"/>
    <property type="match status" value="1"/>
</dbReference>
<dbReference type="PROSITE" id="PS00389">
    <property type="entry name" value="ATPASE_DELTA"/>
    <property type="match status" value="1"/>
</dbReference>
<sequence length="178" mass="20194">MNKEIIAKRYALALFQIATEKQLLDQLEEEIRAVWQVFAENDKFLSLLTYPKLSLEKKKALIKETFAAVSSPLRNTLLLLLERHRIDIVPQLAEQFIHLVNEARGVAEATAYSARPLTEEEKRALSDVFAKKMGKTTLHIENIVDPSLIGGVKLRIGNRIYDGSISGKLERIQRQLIG</sequence>
<keyword id="KW-0066">ATP synthesis</keyword>
<keyword id="KW-1003">Cell membrane</keyword>
<keyword id="KW-0139">CF(1)</keyword>
<keyword id="KW-0375">Hydrogen ion transport</keyword>
<keyword id="KW-0406">Ion transport</keyword>
<keyword id="KW-0472">Membrane</keyword>
<keyword id="KW-0813">Transport</keyword>